<organism>
    <name type="scientific">Tuber melanosporum (strain Mel28)</name>
    <name type="common">Perigord black truffle</name>
    <dbReference type="NCBI Taxonomy" id="656061"/>
    <lineage>
        <taxon>Eukaryota</taxon>
        <taxon>Fungi</taxon>
        <taxon>Dikarya</taxon>
        <taxon>Ascomycota</taxon>
        <taxon>Pezizomycotina</taxon>
        <taxon>Pezizomycetes</taxon>
        <taxon>Pezizales</taxon>
        <taxon>Tuberaceae</taxon>
        <taxon>Tuber</taxon>
    </lineage>
</organism>
<gene>
    <name type="ORF">GSTUM_00007013001</name>
</gene>
<evidence type="ECO:0000255" key="1">
    <source>
        <dbReference type="HAMAP-Rule" id="MF_03155"/>
    </source>
</evidence>
<evidence type="ECO:0000305" key="2"/>
<proteinExistence type="inferred from homology"/>
<reference key="1">
    <citation type="journal article" date="2010" name="Nature">
        <title>Perigord black truffle genome uncovers evolutionary origins and mechanisms of symbiosis.</title>
        <authorList>
            <person name="Martin F."/>
            <person name="Kohler A."/>
            <person name="Murat C."/>
            <person name="Balestrini R."/>
            <person name="Coutinho P.M."/>
            <person name="Jaillon O."/>
            <person name="Montanini B."/>
            <person name="Morin E."/>
            <person name="Noel B."/>
            <person name="Percudani R."/>
            <person name="Porcel B."/>
            <person name="Rubini A."/>
            <person name="Amicucci A."/>
            <person name="Amselem J."/>
            <person name="Anthouard V."/>
            <person name="Arcioni S."/>
            <person name="Artiguenave F."/>
            <person name="Aury J.M."/>
            <person name="Ballario P."/>
            <person name="Bolchi A."/>
            <person name="Brenna A."/>
            <person name="Brun A."/>
            <person name="Buee M."/>
            <person name="Cantarel B."/>
            <person name="Chevalier G."/>
            <person name="Couloux A."/>
            <person name="Da Silva C."/>
            <person name="Denoeud F."/>
            <person name="Duplessis S."/>
            <person name="Ghignone S."/>
            <person name="Hilselberger B."/>
            <person name="Iotti M."/>
            <person name="Marcais B."/>
            <person name="Mello A."/>
            <person name="Miranda M."/>
            <person name="Pacioni G."/>
            <person name="Quesneville H."/>
            <person name="Riccioni C."/>
            <person name="Ruotolo R."/>
            <person name="Splivallo R."/>
            <person name="Stocchi V."/>
            <person name="Tisserant E."/>
            <person name="Viscomi A.R."/>
            <person name="Zambonelli A."/>
            <person name="Zampieri E."/>
            <person name="Henrissat B."/>
            <person name="Lebrun M.H."/>
            <person name="Paolocci F."/>
            <person name="Bonfante P."/>
            <person name="Ottonello S."/>
            <person name="Wincker P."/>
        </authorList>
    </citation>
    <scope>NUCLEOTIDE SEQUENCE [LARGE SCALE GENOMIC DNA]</scope>
    <source>
        <strain>Mel28</strain>
    </source>
</reference>
<accession>D5GFR0</accession>
<keyword id="KW-0963">Cytoplasm</keyword>
<keyword id="KW-0328">Glycosyltransferase</keyword>
<keyword id="KW-0539">Nucleus</keyword>
<keyword id="KW-0660">Purine salvage</keyword>
<keyword id="KW-1185">Reference proteome</keyword>
<keyword id="KW-0808">Transferase</keyword>
<dbReference type="EC" id="2.4.2.28" evidence="1"/>
<dbReference type="EMBL" id="FN430220">
    <property type="protein sequence ID" value="CAZ83353.1"/>
    <property type="status" value="ALT_INIT"/>
    <property type="molecule type" value="Genomic_DNA"/>
</dbReference>
<dbReference type="SMR" id="D5GFR0"/>
<dbReference type="FunCoup" id="D5GFR0">
    <property type="interactions" value="385"/>
</dbReference>
<dbReference type="STRING" id="656061.D5GFR0"/>
<dbReference type="eggNOG" id="KOG3985">
    <property type="taxonomic scope" value="Eukaryota"/>
</dbReference>
<dbReference type="InParanoid" id="D5GFR0"/>
<dbReference type="UniPathway" id="UPA00904">
    <property type="reaction ID" value="UER00873"/>
</dbReference>
<dbReference type="Proteomes" id="UP000006911">
    <property type="component" value="Unassembled WGS sequence"/>
</dbReference>
<dbReference type="GO" id="GO:0005829">
    <property type="term" value="C:cytosol"/>
    <property type="evidence" value="ECO:0007669"/>
    <property type="project" value="TreeGrafter"/>
</dbReference>
<dbReference type="GO" id="GO:0005634">
    <property type="term" value="C:nucleus"/>
    <property type="evidence" value="ECO:0007669"/>
    <property type="project" value="UniProtKB-SubCell"/>
</dbReference>
<dbReference type="GO" id="GO:0017061">
    <property type="term" value="F:S-methyl-5-thioadenosine phosphorylase activity"/>
    <property type="evidence" value="ECO:0007669"/>
    <property type="project" value="UniProtKB-UniRule"/>
</dbReference>
<dbReference type="GO" id="GO:0019509">
    <property type="term" value="P:L-methionine salvage from methylthioadenosine"/>
    <property type="evidence" value="ECO:0007669"/>
    <property type="project" value="UniProtKB-UniRule"/>
</dbReference>
<dbReference type="GO" id="GO:0006166">
    <property type="term" value="P:purine ribonucleoside salvage"/>
    <property type="evidence" value="ECO:0007669"/>
    <property type="project" value="UniProtKB-KW"/>
</dbReference>
<dbReference type="CDD" id="cd09010">
    <property type="entry name" value="MTAP_SsMTAPII_like_MTIP"/>
    <property type="match status" value="1"/>
</dbReference>
<dbReference type="FunFam" id="3.40.50.1580:FF:000008">
    <property type="entry name" value="S-methyl-5'-thioadenosine phosphorylase"/>
    <property type="match status" value="1"/>
</dbReference>
<dbReference type="Gene3D" id="3.40.50.1580">
    <property type="entry name" value="Nucleoside phosphorylase domain"/>
    <property type="match status" value="1"/>
</dbReference>
<dbReference type="HAMAP" id="MF_01963">
    <property type="entry name" value="MTAP"/>
    <property type="match status" value="1"/>
</dbReference>
<dbReference type="InterPro" id="IPR010044">
    <property type="entry name" value="MTAP"/>
</dbReference>
<dbReference type="InterPro" id="IPR000845">
    <property type="entry name" value="Nucleoside_phosphorylase_d"/>
</dbReference>
<dbReference type="InterPro" id="IPR035994">
    <property type="entry name" value="Nucleoside_phosphorylase_sf"/>
</dbReference>
<dbReference type="InterPro" id="IPR018099">
    <property type="entry name" value="Purine_phosphorylase-2_CS"/>
</dbReference>
<dbReference type="NCBIfam" id="TIGR01694">
    <property type="entry name" value="MTAP"/>
    <property type="match status" value="1"/>
</dbReference>
<dbReference type="PANTHER" id="PTHR42679">
    <property type="entry name" value="S-METHYL-5'-THIOADENOSINE PHOSPHORYLASE"/>
    <property type="match status" value="1"/>
</dbReference>
<dbReference type="PANTHER" id="PTHR42679:SF2">
    <property type="entry name" value="S-METHYL-5'-THIOADENOSINE PHOSPHORYLASE"/>
    <property type="match status" value="1"/>
</dbReference>
<dbReference type="Pfam" id="PF01048">
    <property type="entry name" value="PNP_UDP_1"/>
    <property type="match status" value="1"/>
</dbReference>
<dbReference type="SUPFAM" id="SSF53167">
    <property type="entry name" value="Purine and uridine phosphorylases"/>
    <property type="match status" value="1"/>
</dbReference>
<dbReference type="PROSITE" id="PS01240">
    <property type="entry name" value="PNP_MTAP_2"/>
    <property type="match status" value="1"/>
</dbReference>
<protein>
    <recommendedName>
        <fullName evidence="1">S-methyl-5'-thioadenosine phosphorylase</fullName>
        <ecNumber evidence="1">2.4.2.28</ecNumber>
    </recommendedName>
    <alternativeName>
        <fullName evidence="1">5'-methylthioadenosine phosphorylase</fullName>
        <shortName evidence="1">MTA phosphorylase</shortName>
        <shortName evidence="1">MTAP</shortName>
        <shortName evidence="1">MTAPase</shortName>
    </alternativeName>
</protein>
<comment type="function">
    <text evidence="1">Catalyzes the reversible phosphorylation of S-methyl-5'-thioadenosine (MTA) to adenine and 5-methylthioribose-1-phosphate. Involved in the breakdown of MTA, a major by-product of polyamine biosynthesis. Responsible for the first step in the methionine salvage pathway after MTA has been generated from S-adenosylmethionine. Has broad substrate specificity with 6-aminopurine nucleosides as preferred substrates.</text>
</comment>
<comment type="catalytic activity">
    <reaction evidence="1">
        <text>S-methyl-5'-thioadenosine + phosphate = 5-(methylsulfanyl)-alpha-D-ribose 1-phosphate + adenine</text>
        <dbReference type="Rhea" id="RHEA:11852"/>
        <dbReference type="ChEBI" id="CHEBI:16708"/>
        <dbReference type="ChEBI" id="CHEBI:17509"/>
        <dbReference type="ChEBI" id="CHEBI:43474"/>
        <dbReference type="ChEBI" id="CHEBI:58533"/>
        <dbReference type="EC" id="2.4.2.28"/>
    </reaction>
</comment>
<comment type="pathway">
    <text evidence="1">Amino-acid biosynthesis; L-methionine biosynthesis via salvage pathway; S-methyl-5-thio-alpha-D-ribose 1-phosphate from S-methyl-5'-thioadenosine (phosphorylase route): step 1/1.</text>
</comment>
<comment type="subunit">
    <text evidence="1">Homotrimer.</text>
</comment>
<comment type="subcellular location">
    <subcellularLocation>
        <location evidence="1">Cytoplasm</location>
    </subcellularLocation>
    <subcellularLocation>
        <location evidence="1">Nucleus</location>
    </subcellularLocation>
</comment>
<comment type="similarity">
    <text evidence="1">Belongs to the PNP/MTAP phosphorylase family. MTAP subfamily.</text>
</comment>
<comment type="sequence caution" evidence="2">
    <conflict type="erroneous initiation">
        <sequence resource="EMBL-CDS" id="CAZ83353"/>
    </conflict>
    <text>Extended N-terminus.</text>
</comment>
<name>MTAP_TUBMM</name>
<sequence length="309" mass="33148">MPLPDTFSESVRIAVIGGTGISALEAEGFTAVASLDIQTPYGAPGSPLTILKTPQNTPIAFLSRHGLHHELTPTEIPNRANIAALRSIGVRSIIAFSAVGSLQEHIRPRDFVVPSQIIDRTKGLRASTFFEGGLVGHVGFADPFDSELSKVVFDIGSDGVLNGEGVKMHKDALLICMEGPQFSTRAESNLYRSWGGDVINMSALPEAKLAKEAEIAYVMVCMSTDYDCWKTNEAAVTVETVMGNMHANGANAKHLAAAILKELAKEEHQDLVGAKHLEGLSKWACCTAPAGRKAEVVKKIEFMLPGYFS</sequence>
<feature type="chain" id="PRO_0000415136" description="S-methyl-5'-thioadenosine phosphorylase">
    <location>
        <begin position="1"/>
        <end position="309"/>
    </location>
</feature>
<feature type="binding site" evidence="1">
    <location>
        <position position="19"/>
    </location>
    <ligand>
        <name>phosphate</name>
        <dbReference type="ChEBI" id="CHEBI:43474"/>
    </ligand>
</feature>
<feature type="binding site" evidence="1">
    <location>
        <begin position="64"/>
        <end position="65"/>
    </location>
    <ligand>
        <name>phosphate</name>
        <dbReference type="ChEBI" id="CHEBI:43474"/>
    </ligand>
</feature>
<feature type="binding site" evidence="1">
    <location>
        <begin position="97"/>
        <end position="98"/>
    </location>
    <ligand>
        <name>phosphate</name>
        <dbReference type="ChEBI" id="CHEBI:43474"/>
    </ligand>
</feature>
<feature type="binding site" evidence="1">
    <location>
        <position position="201"/>
    </location>
    <ligand>
        <name>substrate</name>
    </ligand>
</feature>
<feature type="binding site" evidence="1">
    <location>
        <position position="202"/>
    </location>
    <ligand>
        <name>phosphate</name>
        <dbReference type="ChEBI" id="CHEBI:43474"/>
    </ligand>
</feature>
<feature type="binding site" evidence="1">
    <location>
        <begin position="225"/>
        <end position="227"/>
    </location>
    <ligand>
        <name>substrate</name>
    </ligand>
</feature>
<feature type="site" description="Important for substrate specificity" evidence="1">
    <location>
        <position position="183"/>
    </location>
</feature>
<feature type="site" description="Important for substrate specificity" evidence="1">
    <location>
        <position position="238"/>
    </location>
</feature>